<gene>
    <name evidence="1" type="primary">speH</name>
    <name type="ordered locus">PAE1490</name>
</gene>
<dbReference type="EC" id="4.1.1.50" evidence="1"/>
<dbReference type="EMBL" id="AE009441">
    <property type="protein sequence ID" value="AAL63516.1"/>
    <property type="molecule type" value="Genomic_DNA"/>
</dbReference>
<dbReference type="RefSeq" id="WP_011007989.1">
    <property type="nucleotide sequence ID" value="NC_003364.1"/>
</dbReference>
<dbReference type="SMR" id="Q8ZX33"/>
<dbReference type="STRING" id="178306.PAE1490"/>
<dbReference type="EnsemblBacteria" id="AAL63516">
    <property type="protein sequence ID" value="AAL63516"/>
    <property type="gene ID" value="PAE1490"/>
</dbReference>
<dbReference type="GeneID" id="1465758"/>
<dbReference type="KEGG" id="pai:PAE1490"/>
<dbReference type="PATRIC" id="fig|178306.9.peg.1100"/>
<dbReference type="eggNOG" id="arCOG00279">
    <property type="taxonomic scope" value="Archaea"/>
</dbReference>
<dbReference type="HOGENOM" id="CLU_125470_2_1_2"/>
<dbReference type="InParanoid" id="Q8ZX33"/>
<dbReference type="UniPathway" id="UPA00331">
    <property type="reaction ID" value="UER00451"/>
</dbReference>
<dbReference type="Proteomes" id="UP000002439">
    <property type="component" value="Chromosome"/>
</dbReference>
<dbReference type="GO" id="GO:0005829">
    <property type="term" value="C:cytosol"/>
    <property type="evidence" value="ECO:0000318"/>
    <property type="project" value="GO_Central"/>
</dbReference>
<dbReference type="GO" id="GO:0004014">
    <property type="term" value="F:adenosylmethionine decarboxylase activity"/>
    <property type="evidence" value="ECO:0000318"/>
    <property type="project" value="GO_Central"/>
</dbReference>
<dbReference type="GO" id="GO:0008295">
    <property type="term" value="P:spermidine biosynthetic process"/>
    <property type="evidence" value="ECO:0000318"/>
    <property type="project" value="GO_Central"/>
</dbReference>
<dbReference type="Gene3D" id="3.30.160.750">
    <property type="match status" value="1"/>
</dbReference>
<dbReference type="Gene3D" id="3.30.360.110">
    <property type="entry name" value="S-adenosylmethionine decarboxylase domain"/>
    <property type="match status" value="1"/>
</dbReference>
<dbReference type="HAMAP" id="MF_00464">
    <property type="entry name" value="AdoMetDC_1"/>
    <property type="match status" value="1"/>
</dbReference>
<dbReference type="InterPro" id="IPR042286">
    <property type="entry name" value="AdoMetDC_C"/>
</dbReference>
<dbReference type="InterPro" id="IPR003826">
    <property type="entry name" value="AdoMetDC_fam_prok"/>
</dbReference>
<dbReference type="InterPro" id="IPR042284">
    <property type="entry name" value="AdoMetDC_N"/>
</dbReference>
<dbReference type="InterPro" id="IPR016067">
    <property type="entry name" value="S-AdoMet_deCO2ase_core"/>
</dbReference>
<dbReference type="InterPro" id="IPR017716">
    <property type="entry name" value="S-AdoMet_deCOase_pro-enz"/>
</dbReference>
<dbReference type="NCBIfam" id="TIGR03330">
    <property type="entry name" value="SAM_DCase_Bsu"/>
    <property type="match status" value="1"/>
</dbReference>
<dbReference type="PANTHER" id="PTHR33866">
    <property type="entry name" value="S-ADENOSYLMETHIONINE DECARBOXYLASE PROENZYME"/>
    <property type="match status" value="1"/>
</dbReference>
<dbReference type="PANTHER" id="PTHR33866:SF2">
    <property type="entry name" value="S-ADENOSYLMETHIONINE DECARBOXYLASE PROENZYME"/>
    <property type="match status" value="1"/>
</dbReference>
<dbReference type="Pfam" id="PF02675">
    <property type="entry name" value="AdoMet_dc"/>
    <property type="match status" value="1"/>
</dbReference>
<dbReference type="SUPFAM" id="SSF56276">
    <property type="entry name" value="S-adenosylmethionine decarboxylase"/>
    <property type="match status" value="1"/>
</dbReference>
<proteinExistence type="inferred from homology"/>
<name>SPEH_PYRAE</name>
<sequence>MAGGVGGRVVVGRHVYGNLYGCDSRVLRDEAALITIVKEAVKVANAMLLSIGSYRFGPGGGLTVFAVVAESHISIHTWPEHGFATVDVYTCGDHTDPKAAFDYIVSQLRPKRVEVFFGDRSMYGE</sequence>
<organism>
    <name type="scientific">Pyrobaculum aerophilum (strain ATCC 51768 / DSM 7523 / JCM 9630 / CIP 104966 / NBRC 100827 / IM2)</name>
    <dbReference type="NCBI Taxonomy" id="178306"/>
    <lineage>
        <taxon>Archaea</taxon>
        <taxon>Thermoproteota</taxon>
        <taxon>Thermoprotei</taxon>
        <taxon>Thermoproteales</taxon>
        <taxon>Thermoproteaceae</taxon>
        <taxon>Pyrobaculum</taxon>
    </lineage>
</organism>
<protein>
    <recommendedName>
        <fullName evidence="1">S-adenosylmethionine decarboxylase proenzyme</fullName>
        <shortName evidence="1">AdoMetDC</shortName>
        <shortName evidence="1">SAMDC</shortName>
        <ecNumber evidence="1">4.1.1.50</ecNumber>
    </recommendedName>
    <component>
        <recommendedName>
            <fullName evidence="1">S-adenosylmethionine decarboxylase beta chain</fullName>
        </recommendedName>
    </component>
    <component>
        <recommendedName>
            <fullName evidence="1">S-adenosylmethionine decarboxylase alpha chain</fullName>
        </recommendedName>
    </component>
</protein>
<reference key="1">
    <citation type="journal article" date="2002" name="Proc. Natl. Acad. Sci. U.S.A.">
        <title>Genome sequence of the hyperthermophilic crenarchaeon Pyrobaculum aerophilum.</title>
        <authorList>
            <person name="Fitz-Gibbon S.T."/>
            <person name="Ladner H."/>
            <person name="Kim U.-J."/>
            <person name="Stetter K.O."/>
            <person name="Simon M.I."/>
            <person name="Miller J.H."/>
        </authorList>
    </citation>
    <scope>NUCLEOTIDE SEQUENCE [LARGE SCALE GENOMIC DNA]</scope>
    <source>
        <strain>ATCC 51768 / DSM 7523 / JCM 9630 / CIP 104966 / NBRC 100827 / IM2</strain>
    </source>
</reference>
<accession>Q8ZX33</accession>
<feature type="chain" id="PRO_0000030139" description="S-adenosylmethionine decarboxylase beta chain" evidence="1">
    <location>
        <begin position="1"/>
        <end position="70"/>
    </location>
</feature>
<feature type="chain" id="PRO_0000030140" description="S-adenosylmethionine decarboxylase alpha chain" evidence="1">
    <location>
        <begin position="71"/>
        <end position="125"/>
    </location>
</feature>
<feature type="active site" description="Schiff-base intermediate with substrate; via pyruvic acid" evidence="1">
    <location>
        <position position="71"/>
    </location>
</feature>
<feature type="active site" description="Proton acceptor; for processing activity" evidence="1">
    <location>
        <position position="76"/>
    </location>
</feature>
<feature type="active site" description="Proton donor; for catalytic activity" evidence="1">
    <location>
        <position position="91"/>
    </location>
</feature>
<feature type="site" description="Cleavage (non-hydrolytic); by autolysis" evidence="1">
    <location>
        <begin position="70"/>
        <end position="71"/>
    </location>
</feature>
<feature type="modified residue" description="Pyruvic acid (Ser); by autocatalysis" evidence="1">
    <location>
        <position position="71"/>
    </location>
</feature>
<keyword id="KW-0068">Autocatalytic cleavage</keyword>
<keyword id="KW-0210">Decarboxylase</keyword>
<keyword id="KW-0456">Lyase</keyword>
<keyword id="KW-0620">Polyamine biosynthesis</keyword>
<keyword id="KW-0670">Pyruvate</keyword>
<keyword id="KW-1185">Reference proteome</keyword>
<keyword id="KW-0949">S-adenosyl-L-methionine</keyword>
<keyword id="KW-0704">Schiff base</keyword>
<keyword id="KW-0745">Spermidine biosynthesis</keyword>
<keyword id="KW-0865">Zymogen</keyword>
<evidence type="ECO:0000255" key="1">
    <source>
        <dbReference type="HAMAP-Rule" id="MF_00464"/>
    </source>
</evidence>
<comment type="function">
    <text evidence="1">Catalyzes the decarboxylation of S-adenosylmethionine to S-adenosylmethioninamine (dcAdoMet), the propylamine donor required for the synthesis of the polyamines spermine and spermidine from the diamine putrescine.</text>
</comment>
<comment type="catalytic activity">
    <reaction evidence="1">
        <text>S-adenosyl-L-methionine + H(+) = S-adenosyl 3-(methylsulfanyl)propylamine + CO2</text>
        <dbReference type="Rhea" id="RHEA:15981"/>
        <dbReference type="ChEBI" id="CHEBI:15378"/>
        <dbReference type="ChEBI" id="CHEBI:16526"/>
        <dbReference type="ChEBI" id="CHEBI:57443"/>
        <dbReference type="ChEBI" id="CHEBI:59789"/>
        <dbReference type="EC" id="4.1.1.50"/>
    </reaction>
</comment>
<comment type="cofactor">
    <cofactor evidence="1">
        <name>pyruvate</name>
        <dbReference type="ChEBI" id="CHEBI:15361"/>
    </cofactor>
    <text evidence="1">Binds 1 pyruvoyl group covalently per subunit.</text>
</comment>
<comment type="pathway">
    <text evidence="1">Amine and polyamine biosynthesis; S-adenosylmethioninamine biosynthesis; S-adenosylmethioninamine from S-adenosyl-L-methionine: step 1/1.</text>
</comment>
<comment type="subunit">
    <text evidence="1">Heterotetramer of two alpha and two beta chains arranged as a dimer of alpha/beta heterodimers.</text>
</comment>
<comment type="PTM">
    <text evidence="1">Is synthesized initially as an inactive proenzyme. Formation of the active enzyme involves a self-maturation process in which the active site pyruvoyl group is generated from an internal serine residue via an autocatalytic post-translational modification. Two non-identical subunits are generated from the proenzyme in this reaction, and the pyruvate is formed at the N-terminus of the alpha chain, which is derived from the carboxyl end of the proenzyme. The post-translation cleavage follows an unusual pathway, termed non-hydrolytic serinolysis, in which the side chain hydroxyl group of the serine supplies its oxygen atom to form the C-terminus of the beta chain, while the remainder of the serine residue undergoes an oxidative deamination to produce ammonia and the pyruvoyl group blocking the N-terminus of the alpha chain.</text>
</comment>
<comment type="similarity">
    <text evidence="1">Belongs to the prokaryotic AdoMetDC family. Type 1 subfamily.</text>
</comment>